<proteinExistence type="inferred from homology"/>
<dbReference type="EMBL" id="CP000716">
    <property type="protein sequence ID" value="ABR31599.1"/>
    <property type="molecule type" value="Genomic_DNA"/>
</dbReference>
<dbReference type="RefSeq" id="WP_012057958.1">
    <property type="nucleotide sequence ID" value="NC_009616.1"/>
</dbReference>
<dbReference type="SMR" id="A6LNU8"/>
<dbReference type="STRING" id="391009.Tmel_1760"/>
<dbReference type="KEGG" id="tme:Tmel_1760"/>
<dbReference type="eggNOG" id="COG1923">
    <property type="taxonomic scope" value="Bacteria"/>
</dbReference>
<dbReference type="HOGENOM" id="CLU_113688_0_2_0"/>
<dbReference type="OrthoDB" id="9799751at2"/>
<dbReference type="Proteomes" id="UP000001110">
    <property type="component" value="Chromosome"/>
</dbReference>
<dbReference type="GO" id="GO:0005829">
    <property type="term" value="C:cytosol"/>
    <property type="evidence" value="ECO:0007669"/>
    <property type="project" value="TreeGrafter"/>
</dbReference>
<dbReference type="GO" id="GO:0003723">
    <property type="term" value="F:RNA binding"/>
    <property type="evidence" value="ECO:0007669"/>
    <property type="project" value="UniProtKB-UniRule"/>
</dbReference>
<dbReference type="GO" id="GO:0006355">
    <property type="term" value="P:regulation of DNA-templated transcription"/>
    <property type="evidence" value="ECO:0007669"/>
    <property type="project" value="InterPro"/>
</dbReference>
<dbReference type="GO" id="GO:0043487">
    <property type="term" value="P:regulation of RNA stability"/>
    <property type="evidence" value="ECO:0007669"/>
    <property type="project" value="TreeGrafter"/>
</dbReference>
<dbReference type="GO" id="GO:0045974">
    <property type="term" value="P:regulation of translation, ncRNA-mediated"/>
    <property type="evidence" value="ECO:0007669"/>
    <property type="project" value="TreeGrafter"/>
</dbReference>
<dbReference type="CDD" id="cd01716">
    <property type="entry name" value="Hfq"/>
    <property type="match status" value="1"/>
</dbReference>
<dbReference type="Gene3D" id="2.30.30.100">
    <property type="match status" value="1"/>
</dbReference>
<dbReference type="HAMAP" id="MF_00436">
    <property type="entry name" value="Hfq"/>
    <property type="match status" value="1"/>
</dbReference>
<dbReference type="InterPro" id="IPR005001">
    <property type="entry name" value="Hfq"/>
</dbReference>
<dbReference type="InterPro" id="IPR010920">
    <property type="entry name" value="LSM_dom_sf"/>
</dbReference>
<dbReference type="InterPro" id="IPR047575">
    <property type="entry name" value="Sm"/>
</dbReference>
<dbReference type="NCBIfam" id="TIGR02383">
    <property type="entry name" value="Hfq"/>
    <property type="match status" value="1"/>
</dbReference>
<dbReference type="NCBIfam" id="NF001602">
    <property type="entry name" value="PRK00395.1"/>
    <property type="match status" value="1"/>
</dbReference>
<dbReference type="PANTHER" id="PTHR34772">
    <property type="entry name" value="RNA-BINDING PROTEIN HFQ"/>
    <property type="match status" value="1"/>
</dbReference>
<dbReference type="PANTHER" id="PTHR34772:SF1">
    <property type="entry name" value="RNA-BINDING PROTEIN HFQ"/>
    <property type="match status" value="1"/>
</dbReference>
<dbReference type="Pfam" id="PF17209">
    <property type="entry name" value="Hfq"/>
    <property type="match status" value="1"/>
</dbReference>
<dbReference type="SUPFAM" id="SSF50182">
    <property type="entry name" value="Sm-like ribonucleoproteins"/>
    <property type="match status" value="1"/>
</dbReference>
<dbReference type="PROSITE" id="PS52002">
    <property type="entry name" value="SM"/>
    <property type="match status" value="1"/>
</dbReference>
<evidence type="ECO:0000255" key="1">
    <source>
        <dbReference type="HAMAP-Rule" id="MF_00436"/>
    </source>
</evidence>
<evidence type="ECO:0000255" key="2">
    <source>
        <dbReference type="PROSITE-ProRule" id="PRU01346"/>
    </source>
</evidence>
<comment type="function">
    <text evidence="1">RNA chaperone that binds small regulatory RNA (sRNAs) and mRNAs to facilitate mRNA translational regulation in response to envelope stress, environmental stress and changes in metabolite concentrations. Also binds with high specificity to tRNAs.</text>
</comment>
<comment type="subunit">
    <text evidence="1">Homohexamer.</text>
</comment>
<comment type="similarity">
    <text evidence="1">Belongs to the Hfq family.</text>
</comment>
<organism>
    <name type="scientific">Thermosipho melanesiensis (strain DSM 12029 / CIP 104789 / BI429)</name>
    <dbReference type="NCBI Taxonomy" id="391009"/>
    <lineage>
        <taxon>Bacteria</taxon>
        <taxon>Thermotogati</taxon>
        <taxon>Thermotogota</taxon>
        <taxon>Thermotogae</taxon>
        <taxon>Thermotogales</taxon>
        <taxon>Fervidobacteriaceae</taxon>
        <taxon>Thermosipho</taxon>
    </lineage>
</organism>
<gene>
    <name evidence="1" type="primary">hfq</name>
    <name type="ordered locus">Tmel_1760</name>
</gene>
<accession>A6LNU8</accession>
<sequence length="86" mass="10012">MAEKFNLQDRFLNILRTSKIPVKVYLVNGFQTKGIIRSFDNFTMLLENGNQQNLIYKHAVSTIMPESFVRLTSKQQQEGKDSDEEE</sequence>
<name>HFQ_THEM4</name>
<keyword id="KW-0694">RNA-binding</keyword>
<keyword id="KW-0346">Stress response</keyword>
<reference key="1">
    <citation type="submission" date="2007-05" db="EMBL/GenBank/DDBJ databases">
        <title>Complete sequence of Thermosipho melanesiensis BI429.</title>
        <authorList>
            <consortium name="US DOE Joint Genome Institute"/>
            <person name="Copeland A."/>
            <person name="Lucas S."/>
            <person name="Lapidus A."/>
            <person name="Barry K."/>
            <person name="Glavina del Rio T."/>
            <person name="Dalin E."/>
            <person name="Tice H."/>
            <person name="Pitluck S."/>
            <person name="Chertkov O."/>
            <person name="Brettin T."/>
            <person name="Bruce D."/>
            <person name="Detter J.C."/>
            <person name="Han C."/>
            <person name="Schmutz J."/>
            <person name="Larimer F."/>
            <person name="Land M."/>
            <person name="Hauser L."/>
            <person name="Kyrpides N."/>
            <person name="Mikhailova N."/>
            <person name="Nelson K."/>
            <person name="Gogarten J.P."/>
            <person name="Noll K."/>
            <person name="Richardson P."/>
        </authorList>
    </citation>
    <scope>NUCLEOTIDE SEQUENCE [LARGE SCALE GENOMIC DNA]</scope>
    <source>
        <strain>DSM 12029 / CIP 104789 / BI429</strain>
    </source>
</reference>
<feature type="chain" id="PRO_1000072332" description="RNA-binding protein Hfq">
    <location>
        <begin position="1"/>
        <end position="86"/>
    </location>
</feature>
<feature type="domain" description="Sm" evidence="2">
    <location>
        <begin position="9"/>
        <end position="69"/>
    </location>
</feature>
<protein>
    <recommendedName>
        <fullName evidence="1">RNA-binding protein Hfq</fullName>
    </recommendedName>
</protein>